<sequence>MTGIISTDVLIVGAGPVGLFAVFELGLFDMKCHLIDILDKPGGQCAELYPEKPIYDIPGWPSISAQGLVDKLLEQIHPFKPDFTYNRMVSSLEKLEDGSFRVTTDENEVFEAKVVVIAAGGGSFQPKRPPIPGIEPYEGKSVFYSVRRMEDFRGHDLVIVGGGDSALDWTLNLQPVAKSVTLVHRRPEFRAAPDSVNKMYAMQEMKQLEFRVGQVTGLTGADGQLSSATIKGGPDGDIEVPCTRMLPFFGLTMKLGPIAEWGLNLHENLIPVDTEKFQTSVPGIFAVGDINSYPGKLKLILSGFHEVALMAQAAKRIVSPGERIVFQYTTSSTSLQKKLGVVG</sequence>
<keyword id="KW-0274">FAD</keyword>
<keyword id="KW-0285">Flavoprotein</keyword>
<keyword id="KW-0521">NADP</keyword>
<keyword id="KW-0560">Oxidoreductase</keyword>
<reference key="1">
    <citation type="journal article" date="2000" name="DNA Res.">
        <title>Complete genome structure of the nitrogen-fixing symbiotic bacterium Mesorhizobium loti.</title>
        <authorList>
            <person name="Kaneko T."/>
            <person name="Nakamura Y."/>
            <person name="Sato S."/>
            <person name="Asamizu E."/>
            <person name="Kato T."/>
            <person name="Sasamoto S."/>
            <person name="Watanabe A."/>
            <person name="Idesawa K."/>
            <person name="Ishikawa A."/>
            <person name="Kawashima K."/>
            <person name="Kimura T."/>
            <person name="Kishida Y."/>
            <person name="Kiyokawa C."/>
            <person name="Kohara M."/>
            <person name="Matsumoto M."/>
            <person name="Matsuno A."/>
            <person name="Mochizuki Y."/>
            <person name="Nakayama S."/>
            <person name="Nakazaki N."/>
            <person name="Shimpo S."/>
            <person name="Sugimoto M."/>
            <person name="Takeuchi C."/>
            <person name="Yamada M."/>
            <person name="Tabata S."/>
        </authorList>
    </citation>
    <scope>NUCLEOTIDE SEQUENCE [LARGE SCALE GENOMIC DNA]</scope>
    <source>
        <strain>LMG 29417 / CECT 9101 / MAFF 303099</strain>
    </source>
</reference>
<organism>
    <name type="scientific">Mesorhizobium japonicum (strain LMG 29417 / CECT 9101 / MAFF 303099)</name>
    <name type="common">Mesorhizobium loti (strain MAFF 303099)</name>
    <dbReference type="NCBI Taxonomy" id="266835"/>
    <lineage>
        <taxon>Bacteria</taxon>
        <taxon>Pseudomonadati</taxon>
        <taxon>Pseudomonadota</taxon>
        <taxon>Alphaproteobacteria</taxon>
        <taxon>Hyphomicrobiales</taxon>
        <taxon>Phyllobacteriaceae</taxon>
        <taxon>Mesorhizobium</taxon>
    </lineage>
</organism>
<name>FENR_RHILO</name>
<gene>
    <name type="ordered locus">mll0792</name>
</gene>
<protein>
    <recommendedName>
        <fullName evidence="1">Ferredoxin--NADP reductase</fullName>
        <shortName evidence="1">FNR</shortName>
        <shortName evidence="1">Fd-NADP(+) reductase</shortName>
        <ecNumber evidence="1">1.18.1.2</ecNumber>
    </recommendedName>
</protein>
<feature type="chain" id="PRO_0000364911" description="Ferredoxin--NADP reductase">
    <location>
        <begin position="1"/>
        <end position="343"/>
    </location>
</feature>
<feature type="binding site" evidence="1">
    <location>
        <position position="36"/>
    </location>
    <ligand>
        <name>FAD</name>
        <dbReference type="ChEBI" id="CHEBI:57692"/>
    </ligand>
</feature>
<feature type="binding site" evidence="1">
    <location>
        <position position="44"/>
    </location>
    <ligand>
        <name>FAD</name>
        <dbReference type="ChEBI" id="CHEBI:57692"/>
    </ligand>
</feature>
<feature type="binding site" evidence="1">
    <location>
        <position position="49"/>
    </location>
    <ligand>
        <name>FAD</name>
        <dbReference type="ChEBI" id="CHEBI:57692"/>
    </ligand>
</feature>
<feature type="binding site" evidence="1">
    <location>
        <position position="89"/>
    </location>
    <ligand>
        <name>FAD</name>
        <dbReference type="ChEBI" id="CHEBI:57692"/>
    </ligand>
</feature>
<feature type="binding site" evidence="1">
    <location>
        <position position="124"/>
    </location>
    <ligand>
        <name>FAD</name>
        <dbReference type="ChEBI" id="CHEBI:57692"/>
    </ligand>
</feature>
<feature type="binding site" evidence="1">
    <location>
        <position position="289"/>
    </location>
    <ligand>
        <name>FAD</name>
        <dbReference type="ChEBI" id="CHEBI:57692"/>
    </ligand>
</feature>
<feature type="binding site" evidence="1">
    <location>
        <position position="330"/>
    </location>
    <ligand>
        <name>FAD</name>
        <dbReference type="ChEBI" id="CHEBI:57692"/>
    </ligand>
</feature>
<dbReference type="EC" id="1.18.1.2" evidence="1"/>
<dbReference type="EMBL" id="BA000012">
    <property type="protein sequence ID" value="BAB48307.1"/>
    <property type="molecule type" value="Genomic_DNA"/>
</dbReference>
<dbReference type="RefSeq" id="WP_010909662.1">
    <property type="nucleotide sequence ID" value="NC_002678.2"/>
</dbReference>
<dbReference type="SMR" id="Q98M06"/>
<dbReference type="KEGG" id="mlo:mll0792"/>
<dbReference type="eggNOG" id="COG0492">
    <property type="taxonomic scope" value="Bacteria"/>
</dbReference>
<dbReference type="HOGENOM" id="CLU_031864_5_5_5"/>
<dbReference type="Proteomes" id="UP000000552">
    <property type="component" value="Chromosome"/>
</dbReference>
<dbReference type="GO" id="GO:0004324">
    <property type="term" value="F:ferredoxin-NADP+ reductase activity"/>
    <property type="evidence" value="ECO:0007669"/>
    <property type="project" value="UniProtKB-UniRule"/>
</dbReference>
<dbReference type="GO" id="GO:0050660">
    <property type="term" value="F:flavin adenine dinucleotide binding"/>
    <property type="evidence" value="ECO:0007669"/>
    <property type="project" value="UniProtKB-UniRule"/>
</dbReference>
<dbReference type="GO" id="GO:0050661">
    <property type="term" value="F:NADP binding"/>
    <property type="evidence" value="ECO:0007669"/>
    <property type="project" value="UniProtKB-UniRule"/>
</dbReference>
<dbReference type="Gene3D" id="3.50.50.60">
    <property type="entry name" value="FAD/NAD(P)-binding domain"/>
    <property type="match status" value="3"/>
</dbReference>
<dbReference type="HAMAP" id="MF_01685">
    <property type="entry name" value="FENR2"/>
    <property type="match status" value="1"/>
</dbReference>
<dbReference type="InterPro" id="IPR036188">
    <property type="entry name" value="FAD/NAD-bd_sf"/>
</dbReference>
<dbReference type="InterPro" id="IPR023753">
    <property type="entry name" value="FAD/NAD-binding_dom"/>
</dbReference>
<dbReference type="InterPro" id="IPR022890">
    <property type="entry name" value="Fd--NADP_Rdtase_type_2"/>
</dbReference>
<dbReference type="InterPro" id="IPR050097">
    <property type="entry name" value="Ferredoxin-NADP_redctase_2"/>
</dbReference>
<dbReference type="PANTHER" id="PTHR48105">
    <property type="entry name" value="THIOREDOXIN REDUCTASE 1-RELATED-RELATED"/>
    <property type="match status" value="1"/>
</dbReference>
<dbReference type="Pfam" id="PF07992">
    <property type="entry name" value="Pyr_redox_2"/>
    <property type="match status" value="1"/>
</dbReference>
<dbReference type="PRINTS" id="PR00368">
    <property type="entry name" value="FADPNR"/>
</dbReference>
<dbReference type="PRINTS" id="PR00469">
    <property type="entry name" value="PNDRDTASEII"/>
</dbReference>
<dbReference type="SUPFAM" id="SSF51905">
    <property type="entry name" value="FAD/NAD(P)-binding domain"/>
    <property type="match status" value="1"/>
</dbReference>
<accession>Q98M06</accession>
<comment type="catalytic activity">
    <reaction evidence="1">
        <text>2 reduced [2Fe-2S]-[ferredoxin] + NADP(+) + H(+) = 2 oxidized [2Fe-2S]-[ferredoxin] + NADPH</text>
        <dbReference type="Rhea" id="RHEA:20125"/>
        <dbReference type="Rhea" id="RHEA-COMP:10000"/>
        <dbReference type="Rhea" id="RHEA-COMP:10001"/>
        <dbReference type="ChEBI" id="CHEBI:15378"/>
        <dbReference type="ChEBI" id="CHEBI:33737"/>
        <dbReference type="ChEBI" id="CHEBI:33738"/>
        <dbReference type="ChEBI" id="CHEBI:57783"/>
        <dbReference type="ChEBI" id="CHEBI:58349"/>
        <dbReference type="EC" id="1.18.1.2"/>
    </reaction>
</comment>
<comment type="cofactor">
    <cofactor evidence="1">
        <name>FAD</name>
        <dbReference type="ChEBI" id="CHEBI:57692"/>
    </cofactor>
    <text evidence="1">Binds 1 FAD per subunit.</text>
</comment>
<comment type="subunit">
    <text evidence="1">Homodimer.</text>
</comment>
<comment type="similarity">
    <text evidence="1">Belongs to the ferredoxin--NADP reductase type 2 family.</text>
</comment>
<proteinExistence type="inferred from homology"/>
<evidence type="ECO:0000255" key="1">
    <source>
        <dbReference type="HAMAP-Rule" id="MF_01685"/>
    </source>
</evidence>